<feature type="initiator methionine" description="Removed" evidence="1">
    <location>
        <position position="1"/>
    </location>
</feature>
<feature type="chain" id="PRO_0000425034" description="Profilin-3">
    <location>
        <begin position="2"/>
        <end position="134"/>
    </location>
</feature>
<feature type="short sequence motif" description="Involved in PIP2 interaction">
    <location>
        <begin position="84"/>
        <end position="100"/>
    </location>
</feature>
<feature type="modified residue" description="Phosphothreonine" evidence="1">
    <location>
        <position position="114"/>
    </location>
</feature>
<feature type="disulfide bond" evidence="3">
    <location>
        <begin position="13"/>
        <end position="118"/>
    </location>
</feature>
<protein>
    <recommendedName>
        <fullName>Profilin-3</fullName>
    </recommendedName>
    <alternativeName>
        <fullName>Pollen allergen Ole e 2</fullName>
    </alternativeName>
    <allergenName>Ole e 2</allergenName>
</protein>
<dbReference type="EMBL" id="DQ317567">
    <property type="protein sequence ID" value="ABC47410.1"/>
    <property type="molecule type" value="mRNA"/>
</dbReference>
<dbReference type="SMR" id="A4GE42"/>
<dbReference type="Allergome" id="490">
    <property type="allergen name" value="Ole e 2"/>
</dbReference>
<dbReference type="GO" id="GO:0005938">
    <property type="term" value="C:cell cortex"/>
    <property type="evidence" value="ECO:0007669"/>
    <property type="project" value="TreeGrafter"/>
</dbReference>
<dbReference type="GO" id="GO:0005856">
    <property type="term" value="C:cytoskeleton"/>
    <property type="evidence" value="ECO:0007669"/>
    <property type="project" value="UniProtKB-SubCell"/>
</dbReference>
<dbReference type="GO" id="GO:0003785">
    <property type="term" value="F:actin monomer binding"/>
    <property type="evidence" value="ECO:0007669"/>
    <property type="project" value="TreeGrafter"/>
</dbReference>
<dbReference type="CDD" id="cd00148">
    <property type="entry name" value="PROF"/>
    <property type="match status" value="1"/>
</dbReference>
<dbReference type="FunFam" id="3.30.450.30:FF:000001">
    <property type="entry name" value="Profilin"/>
    <property type="match status" value="1"/>
</dbReference>
<dbReference type="Gene3D" id="3.30.450.30">
    <property type="entry name" value="Dynein light chain 2a, cytoplasmic"/>
    <property type="match status" value="1"/>
</dbReference>
<dbReference type="InterPro" id="IPR048278">
    <property type="entry name" value="PFN"/>
</dbReference>
<dbReference type="InterPro" id="IPR005455">
    <property type="entry name" value="PFN_euk"/>
</dbReference>
<dbReference type="InterPro" id="IPR036140">
    <property type="entry name" value="PFN_sf"/>
</dbReference>
<dbReference type="InterPro" id="IPR027310">
    <property type="entry name" value="Profilin_CS"/>
</dbReference>
<dbReference type="PANTHER" id="PTHR11604">
    <property type="entry name" value="PROFILIN"/>
    <property type="match status" value="1"/>
</dbReference>
<dbReference type="PANTHER" id="PTHR11604:SF25">
    <property type="entry name" value="PROFILIN-5"/>
    <property type="match status" value="1"/>
</dbReference>
<dbReference type="Pfam" id="PF00235">
    <property type="entry name" value="Profilin"/>
    <property type="match status" value="1"/>
</dbReference>
<dbReference type="PRINTS" id="PR00392">
    <property type="entry name" value="PROFILIN"/>
</dbReference>
<dbReference type="PRINTS" id="PR01640">
    <property type="entry name" value="PROFILINPLNT"/>
</dbReference>
<dbReference type="SMART" id="SM00392">
    <property type="entry name" value="PROF"/>
    <property type="match status" value="1"/>
</dbReference>
<dbReference type="SUPFAM" id="SSF55770">
    <property type="entry name" value="Profilin (actin-binding protein)"/>
    <property type="match status" value="1"/>
</dbReference>
<dbReference type="PROSITE" id="PS00414">
    <property type="entry name" value="PROFILIN"/>
    <property type="match status" value="1"/>
</dbReference>
<reference key="1">
    <citation type="journal article" date="2012" name="PLoS ONE">
        <title>Characterization of profilin polymorphism in pollen with a focus on multifunctionality.</title>
        <authorList>
            <person name="Jimenez-Lopez J.C."/>
            <person name="Morales S."/>
            <person name="Castro A.J."/>
            <person name="Volkmann D."/>
            <person name="Rodriguez-Garcia M.I."/>
            <person name="Alche Jde D."/>
        </authorList>
    </citation>
    <scope>NUCLEOTIDE SEQUENCE [MRNA]</scope>
    <scope>POLYMORPHISM</scope>
    <source>
        <strain>cv. Farga</strain>
        <tissue>Pollen</tissue>
    </source>
</reference>
<reference key="2">
    <citation type="journal article" date="2013" name="PLoS ONE">
        <title>Analysis of the effects of polymorphism on pollen profilin structural functionality and the generation of conformational, T- and B-cell epitopes.</title>
        <authorList>
            <person name="Jimenez-Lopez J.C."/>
            <person name="Rodriguez-Garcia M.I."/>
            <person name="Alche J.D."/>
        </authorList>
    </citation>
    <scope>3D-STRUCTURE MODELING</scope>
    <scope>DISULFIDE BOND</scope>
</reference>
<name>PROBQ_OLEEU</name>
<proteinExistence type="evidence at protein level"/>
<accession>A4GE42</accession>
<sequence length="134" mass="14417">MSWQAYVDDHLMCDIEGHEGHRLTAAAIVGHDGSVWAQSATFPQFKPEEMNGIMTDFNEPGHMAPTGLHLGGAKYMVIQGEAGAVIRGKKGSGGITIKKTGQALVFGIYEEPVTPGQCNMVVERLGDYLDEQGL</sequence>
<comment type="function">
    <text evidence="1">Binds to actin and affects the structure of the cytoskeleton. At high concentrations, profilin prevents the polymerization of actin, whereas it enhances it at low concentrations (By similarity).</text>
</comment>
<comment type="subunit">
    <text evidence="1">Occurs in many kinds of cells as a complex with monomeric actin in a 1:1 ratio.</text>
</comment>
<comment type="subcellular location">
    <subcellularLocation>
        <location evidence="1">Cytoplasm</location>
        <location evidence="1">Cytoskeleton</location>
    </subcellularLocation>
</comment>
<comment type="PTM">
    <text evidence="1">Phosphorylated by MAP kinases.</text>
</comment>
<comment type="polymorphism">
    <text>Several isoforms of the allergen exist due to polymorphism.</text>
</comment>
<comment type="allergen">
    <text>Causes an allergic reaction in human.</text>
</comment>
<comment type="miscellaneous">
    <text evidence="3">The variability of the residues taking part of IgE-binding epitopes might be responsible of the difference in cross-reactivity among olive pollen cultivars, and between distantly related pollen species, leading to a variable range of allergy reactions among atopic patients.</text>
</comment>
<comment type="similarity">
    <text evidence="2">Belongs to the profilin family.</text>
</comment>
<organism>
    <name type="scientific">Olea europaea</name>
    <name type="common">Common olive</name>
    <dbReference type="NCBI Taxonomy" id="4146"/>
    <lineage>
        <taxon>Eukaryota</taxon>
        <taxon>Viridiplantae</taxon>
        <taxon>Streptophyta</taxon>
        <taxon>Embryophyta</taxon>
        <taxon>Tracheophyta</taxon>
        <taxon>Spermatophyta</taxon>
        <taxon>Magnoliopsida</taxon>
        <taxon>eudicotyledons</taxon>
        <taxon>Gunneridae</taxon>
        <taxon>Pentapetalae</taxon>
        <taxon>asterids</taxon>
        <taxon>lamiids</taxon>
        <taxon>Lamiales</taxon>
        <taxon>Oleaceae</taxon>
        <taxon>Oleeae</taxon>
        <taxon>Olea</taxon>
    </lineage>
</organism>
<evidence type="ECO:0000250" key="1"/>
<evidence type="ECO:0000305" key="2"/>
<evidence type="ECO:0000305" key="3">
    <source>
    </source>
</evidence>
<keyword id="KW-0009">Actin-binding</keyword>
<keyword id="KW-0020">Allergen</keyword>
<keyword id="KW-0963">Cytoplasm</keyword>
<keyword id="KW-0206">Cytoskeleton</keyword>
<keyword id="KW-1015">Disulfide bond</keyword>
<keyword id="KW-0597">Phosphoprotein</keyword>